<dbReference type="EC" id="2.7.1.25" evidence="1"/>
<dbReference type="EMBL" id="CP000468">
    <property type="protein sequence ID" value="ABJ02184.1"/>
    <property type="molecule type" value="Genomic_DNA"/>
</dbReference>
<dbReference type="RefSeq" id="WP_001173653.1">
    <property type="nucleotide sequence ID" value="NZ_CADILS010000024.1"/>
</dbReference>
<dbReference type="SMR" id="A1AEU4"/>
<dbReference type="KEGG" id="ecv:APECO1_37732"/>
<dbReference type="HOGENOM" id="CLU_046932_1_0_6"/>
<dbReference type="UniPathway" id="UPA00140">
    <property type="reaction ID" value="UER00205"/>
</dbReference>
<dbReference type="Proteomes" id="UP000008216">
    <property type="component" value="Chromosome"/>
</dbReference>
<dbReference type="GO" id="GO:0004020">
    <property type="term" value="F:adenylylsulfate kinase activity"/>
    <property type="evidence" value="ECO:0007669"/>
    <property type="project" value="UniProtKB-UniRule"/>
</dbReference>
<dbReference type="GO" id="GO:0005524">
    <property type="term" value="F:ATP binding"/>
    <property type="evidence" value="ECO:0007669"/>
    <property type="project" value="UniProtKB-UniRule"/>
</dbReference>
<dbReference type="GO" id="GO:0070814">
    <property type="term" value="P:hydrogen sulfide biosynthetic process"/>
    <property type="evidence" value="ECO:0007669"/>
    <property type="project" value="UniProtKB-UniRule"/>
</dbReference>
<dbReference type="GO" id="GO:0000103">
    <property type="term" value="P:sulfate assimilation"/>
    <property type="evidence" value="ECO:0007669"/>
    <property type="project" value="UniProtKB-UniRule"/>
</dbReference>
<dbReference type="CDD" id="cd02027">
    <property type="entry name" value="APSK"/>
    <property type="match status" value="1"/>
</dbReference>
<dbReference type="FunFam" id="3.40.50.300:FF:000212">
    <property type="entry name" value="Adenylyl-sulfate kinase"/>
    <property type="match status" value="1"/>
</dbReference>
<dbReference type="Gene3D" id="3.40.50.300">
    <property type="entry name" value="P-loop containing nucleotide triphosphate hydrolases"/>
    <property type="match status" value="1"/>
</dbReference>
<dbReference type="HAMAP" id="MF_00065">
    <property type="entry name" value="Adenylyl_sulf_kinase"/>
    <property type="match status" value="1"/>
</dbReference>
<dbReference type="InterPro" id="IPR002891">
    <property type="entry name" value="APS_kinase"/>
</dbReference>
<dbReference type="InterPro" id="IPR027417">
    <property type="entry name" value="P-loop_NTPase"/>
</dbReference>
<dbReference type="NCBIfam" id="TIGR00455">
    <property type="entry name" value="apsK"/>
    <property type="match status" value="1"/>
</dbReference>
<dbReference type="NCBIfam" id="NF003013">
    <property type="entry name" value="PRK03846.1"/>
    <property type="match status" value="1"/>
</dbReference>
<dbReference type="PANTHER" id="PTHR11055:SF63">
    <property type="entry name" value="ADENYLYL-SULFATE KINASE 1, CHLOROPLASTIC"/>
    <property type="match status" value="1"/>
</dbReference>
<dbReference type="PANTHER" id="PTHR11055">
    <property type="entry name" value="BIFUNCTIONAL 3'-PHOSPHOADENOSINE 5'-PHOSPHOSULFATE SYNTHASE"/>
    <property type="match status" value="1"/>
</dbReference>
<dbReference type="Pfam" id="PF01583">
    <property type="entry name" value="APS_kinase"/>
    <property type="match status" value="1"/>
</dbReference>
<dbReference type="SUPFAM" id="SSF52540">
    <property type="entry name" value="P-loop containing nucleoside triphosphate hydrolases"/>
    <property type="match status" value="1"/>
</dbReference>
<name>CYSC_ECOK1</name>
<sequence>MALHDENVVWHSHPVTPQQREQHHGHRGVVLWFTGLSGSGKSTVAGALEEALHKLGVSTYLLDGDNVRHGLCSDLGFSDADRKENIRRVGEVANLMVEAGLVVLTAFISPHRAERQMVRERVGEGRFIEVFVDTPLAICEARDPKGLYKKARAGELRNFTGIDSVYEAPESAEIHLNGEQLVTNLVQQLLDLLRQNDIIRS</sequence>
<evidence type="ECO:0000255" key="1">
    <source>
        <dbReference type="HAMAP-Rule" id="MF_00065"/>
    </source>
</evidence>
<evidence type="ECO:0000256" key="2">
    <source>
        <dbReference type="SAM" id="MobiDB-lite"/>
    </source>
</evidence>
<accession>A1AEU4</accession>
<feature type="chain" id="PRO_1000009010" description="Adenylyl-sulfate kinase">
    <location>
        <begin position="1"/>
        <end position="201"/>
    </location>
</feature>
<feature type="region of interest" description="Disordered" evidence="2">
    <location>
        <begin position="1"/>
        <end position="23"/>
    </location>
</feature>
<feature type="active site" description="Phosphoserine intermediate" evidence="1">
    <location>
        <position position="109"/>
    </location>
</feature>
<feature type="binding site" evidence="1">
    <location>
        <begin position="35"/>
        <end position="42"/>
    </location>
    <ligand>
        <name>ATP</name>
        <dbReference type="ChEBI" id="CHEBI:30616"/>
    </ligand>
</feature>
<reference key="1">
    <citation type="journal article" date="2007" name="J. Bacteriol.">
        <title>The genome sequence of avian pathogenic Escherichia coli strain O1:K1:H7 shares strong similarities with human extraintestinal pathogenic E. coli genomes.</title>
        <authorList>
            <person name="Johnson T.J."/>
            <person name="Kariyawasam S."/>
            <person name="Wannemuehler Y."/>
            <person name="Mangiamele P."/>
            <person name="Johnson S.J."/>
            <person name="Doetkott C."/>
            <person name="Skyberg J.A."/>
            <person name="Lynne A.M."/>
            <person name="Johnson J.R."/>
            <person name="Nolan L.K."/>
        </authorList>
    </citation>
    <scope>NUCLEOTIDE SEQUENCE [LARGE SCALE GENOMIC DNA]</scope>
</reference>
<gene>
    <name evidence="1" type="primary">cysC</name>
    <name type="ordered locus">Ecok1_26900</name>
    <name type="ORF">APECO1_37732</name>
</gene>
<keyword id="KW-0067">ATP-binding</keyword>
<keyword id="KW-0418">Kinase</keyword>
<keyword id="KW-0547">Nucleotide-binding</keyword>
<keyword id="KW-0597">Phosphoprotein</keyword>
<keyword id="KW-1185">Reference proteome</keyword>
<keyword id="KW-0808">Transferase</keyword>
<protein>
    <recommendedName>
        <fullName evidence="1">Adenylyl-sulfate kinase</fullName>
        <ecNumber evidence="1">2.7.1.25</ecNumber>
    </recommendedName>
    <alternativeName>
        <fullName evidence="1">APS kinase</fullName>
    </alternativeName>
    <alternativeName>
        <fullName evidence="1">ATP adenosine-5'-phosphosulfate 3'-phosphotransferase</fullName>
    </alternativeName>
    <alternativeName>
        <fullName evidence="1">Adenosine-5'-phosphosulfate kinase</fullName>
    </alternativeName>
</protein>
<organism>
    <name type="scientific">Escherichia coli O1:K1 / APEC</name>
    <dbReference type="NCBI Taxonomy" id="405955"/>
    <lineage>
        <taxon>Bacteria</taxon>
        <taxon>Pseudomonadati</taxon>
        <taxon>Pseudomonadota</taxon>
        <taxon>Gammaproteobacteria</taxon>
        <taxon>Enterobacterales</taxon>
        <taxon>Enterobacteriaceae</taxon>
        <taxon>Escherichia</taxon>
    </lineage>
</organism>
<comment type="function">
    <text evidence="1">Catalyzes the synthesis of activated sulfate.</text>
</comment>
<comment type="catalytic activity">
    <reaction evidence="1">
        <text>adenosine 5'-phosphosulfate + ATP = 3'-phosphoadenylyl sulfate + ADP + H(+)</text>
        <dbReference type="Rhea" id="RHEA:24152"/>
        <dbReference type="ChEBI" id="CHEBI:15378"/>
        <dbReference type="ChEBI" id="CHEBI:30616"/>
        <dbReference type="ChEBI" id="CHEBI:58243"/>
        <dbReference type="ChEBI" id="CHEBI:58339"/>
        <dbReference type="ChEBI" id="CHEBI:456216"/>
        <dbReference type="EC" id="2.7.1.25"/>
    </reaction>
</comment>
<comment type="pathway">
    <text evidence="1">Sulfur metabolism; hydrogen sulfide biosynthesis; sulfite from sulfate: step 2/3.</text>
</comment>
<comment type="similarity">
    <text evidence="1">Belongs to the APS kinase family.</text>
</comment>
<proteinExistence type="inferred from homology"/>